<comment type="function">
    <text evidence="1 2 3 4">Forms a fork protection complex (FPC) with swi3. FPC coordinates leading and lagging strand synthesis and moves with the replication fork. It is required for programmed fork-pausing which is necessary for mating-type switching. FPC stabilizes replication forks in a configuration that is recognized by replication checkpoint sensors. It is involved in termination at the mat1-proximal polar-terminator of replication (RTS1) and also required for activation of the Rad53-like checkpoint kinase cds1.</text>
</comment>
<comment type="subunit">
    <text evidence="3 4">Fork protection complex (FPC) consisting of swi1 and swi3 interacts with mat1 cis-acting sequences and mat1-proximal polar-terminator of replication (RTS1).</text>
</comment>
<comment type="interaction">
    <interactant intactId="EBI-465942">
        <id>Q9UUM2</id>
    </interactant>
    <interactant intactId="EBI-465952">
        <id>O14350</id>
        <label>swi3</label>
    </interactant>
    <organismsDiffer>false</organismsDiffer>
    <experiments>5</experiments>
</comment>
<comment type="subcellular location">
    <subcellularLocation>
        <location evidence="2 3">Nucleus</location>
    </subcellularLocation>
    <text>Associated with chromatin during S phase. Nuclear accumulation requires swi3.</text>
</comment>
<reference key="1">
    <citation type="submission" date="1999-05" db="EMBL/GenBank/DDBJ databases">
        <authorList>
            <person name="Schmidt H."/>
        </authorList>
    </citation>
    <scope>NUCLEOTIDE SEQUENCE [GENOMIC DNA]</scope>
    <source>
        <strain>972 / ATCC 24843</strain>
    </source>
</reference>
<reference key="2">
    <citation type="journal article" date="2002" name="Nature">
        <title>The genome sequence of Schizosaccharomyces pombe.</title>
        <authorList>
            <person name="Wood V."/>
            <person name="Gwilliam R."/>
            <person name="Rajandream M.A."/>
            <person name="Lyne M.H."/>
            <person name="Lyne R."/>
            <person name="Stewart A."/>
            <person name="Sgouros J.G."/>
            <person name="Peat N."/>
            <person name="Hayles J."/>
            <person name="Baker S.G."/>
            <person name="Basham D."/>
            <person name="Bowman S."/>
            <person name="Brooks K."/>
            <person name="Brown D."/>
            <person name="Brown S."/>
            <person name="Chillingworth T."/>
            <person name="Churcher C.M."/>
            <person name="Collins M."/>
            <person name="Connor R."/>
            <person name="Cronin A."/>
            <person name="Davis P."/>
            <person name="Feltwell T."/>
            <person name="Fraser A."/>
            <person name="Gentles S."/>
            <person name="Goble A."/>
            <person name="Hamlin N."/>
            <person name="Harris D.E."/>
            <person name="Hidalgo J."/>
            <person name="Hodgson G."/>
            <person name="Holroyd S."/>
            <person name="Hornsby T."/>
            <person name="Howarth S."/>
            <person name="Huckle E.J."/>
            <person name="Hunt S."/>
            <person name="Jagels K."/>
            <person name="James K.D."/>
            <person name="Jones L."/>
            <person name="Jones M."/>
            <person name="Leather S."/>
            <person name="McDonald S."/>
            <person name="McLean J."/>
            <person name="Mooney P."/>
            <person name="Moule S."/>
            <person name="Mungall K.L."/>
            <person name="Murphy L.D."/>
            <person name="Niblett D."/>
            <person name="Odell C."/>
            <person name="Oliver K."/>
            <person name="O'Neil S."/>
            <person name="Pearson D."/>
            <person name="Quail M.A."/>
            <person name="Rabbinowitsch E."/>
            <person name="Rutherford K.M."/>
            <person name="Rutter S."/>
            <person name="Saunders D."/>
            <person name="Seeger K."/>
            <person name="Sharp S."/>
            <person name="Skelton J."/>
            <person name="Simmonds M.N."/>
            <person name="Squares R."/>
            <person name="Squares S."/>
            <person name="Stevens K."/>
            <person name="Taylor K."/>
            <person name="Taylor R.G."/>
            <person name="Tivey A."/>
            <person name="Walsh S.V."/>
            <person name="Warren T."/>
            <person name="Whitehead S."/>
            <person name="Woodward J.R."/>
            <person name="Volckaert G."/>
            <person name="Aert R."/>
            <person name="Robben J."/>
            <person name="Grymonprez B."/>
            <person name="Weltjens I."/>
            <person name="Vanstreels E."/>
            <person name="Rieger M."/>
            <person name="Schaefer M."/>
            <person name="Mueller-Auer S."/>
            <person name="Gabel C."/>
            <person name="Fuchs M."/>
            <person name="Duesterhoeft A."/>
            <person name="Fritzc C."/>
            <person name="Holzer E."/>
            <person name="Moestl D."/>
            <person name="Hilbert H."/>
            <person name="Borzym K."/>
            <person name="Langer I."/>
            <person name="Beck A."/>
            <person name="Lehrach H."/>
            <person name="Reinhardt R."/>
            <person name="Pohl T.M."/>
            <person name="Eger P."/>
            <person name="Zimmermann W."/>
            <person name="Wedler H."/>
            <person name="Wambutt R."/>
            <person name="Purnelle B."/>
            <person name="Goffeau A."/>
            <person name="Cadieu E."/>
            <person name="Dreano S."/>
            <person name="Gloux S."/>
            <person name="Lelaure V."/>
            <person name="Mottier S."/>
            <person name="Galibert F."/>
            <person name="Aves S.J."/>
            <person name="Xiang Z."/>
            <person name="Hunt C."/>
            <person name="Moore K."/>
            <person name="Hurst S.M."/>
            <person name="Lucas M."/>
            <person name="Rochet M."/>
            <person name="Gaillardin C."/>
            <person name="Tallada V.A."/>
            <person name="Garzon A."/>
            <person name="Thode G."/>
            <person name="Daga R.R."/>
            <person name="Cruzado L."/>
            <person name="Jimenez J."/>
            <person name="Sanchez M."/>
            <person name="del Rey F."/>
            <person name="Benito J."/>
            <person name="Dominguez A."/>
            <person name="Revuelta J.L."/>
            <person name="Moreno S."/>
            <person name="Armstrong J."/>
            <person name="Forsburg S.L."/>
            <person name="Cerutti L."/>
            <person name="Lowe T."/>
            <person name="McCombie W.R."/>
            <person name="Paulsen I."/>
            <person name="Potashkin J."/>
            <person name="Shpakovski G.V."/>
            <person name="Ussery D."/>
            <person name="Barrell B.G."/>
            <person name="Nurse P."/>
        </authorList>
    </citation>
    <scope>NUCLEOTIDE SEQUENCE [LARGE SCALE GENOMIC DNA]</scope>
    <source>
        <strain>972 / ATCC 24843</strain>
    </source>
</reference>
<reference key="3">
    <citation type="journal article" date="2003" name="Mol. Cell. Biol.">
        <title>Swi1 prevents replication fork collapse and controls checkpoint kinase Cds1.</title>
        <authorList>
            <person name="Noguchi E."/>
            <person name="Noguchi C."/>
            <person name="Du L.L."/>
            <person name="Russell P."/>
        </authorList>
    </citation>
    <scope>FUNCTION</scope>
    <scope>SUBCELLULAR LOCATION</scope>
</reference>
<reference key="4">
    <citation type="journal article" date="2000" name="Cell">
        <title>swi1 and swi3 perform imprinting, pausing, and termination of DNA replication in S. pombe.</title>
        <authorList>
            <person name="Dalgaard J.Z."/>
            <person name="Klar A.J."/>
        </authorList>
    </citation>
    <scope>FUNCTION</scope>
</reference>
<reference key="5">
    <citation type="journal article" date="2004" name="Mol. Cell. Biol.">
        <title>Swi1 and swi3 are components of a replication fork protection complex in fission yeast.</title>
        <authorList>
            <person name="Noguchi E."/>
            <person name="Noguchi C."/>
            <person name="McDonald W.H."/>
            <person name="Yates J.R. III"/>
            <person name="Russell P."/>
        </authorList>
    </citation>
    <scope>FUNCTION</scope>
    <scope>INTERACTION WITH SWI3</scope>
    <scope>SUBCELLULAR LOCATION</scope>
</reference>
<reference key="6">
    <citation type="journal article" date="2004" name="Mol. Cell. Biol.">
        <title>Biochemical interactions between proteins and mat1 cis-acting sequences required for imprinting in fission yeast.</title>
        <authorList>
            <person name="Lee B.-S."/>
            <person name="Grewal S.I.S."/>
            <person name="Klar A.J.S."/>
        </authorList>
    </citation>
    <scope>FUNCTION</scope>
    <scope>INTERACTION WITH SWI3</scope>
</reference>
<reference key="7">
    <citation type="journal article" date="2008" name="J. Proteome Res.">
        <title>Phosphoproteome analysis of fission yeast.</title>
        <authorList>
            <person name="Wilson-Grady J.T."/>
            <person name="Villen J."/>
            <person name="Gygi S.P."/>
        </authorList>
    </citation>
    <scope>PHOSPHORYLATION [LARGE SCALE ANALYSIS] AT SER-528; SER-536 AND SER-970</scope>
    <scope>IDENTIFICATION BY MASS SPECTROMETRY</scope>
</reference>
<dbReference type="EMBL" id="Y19036">
    <property type="protein sequence ID" value="CAB44362.1"/>
    <property type="molecule type" value="Genomic_DNA"/>
</dbReference>
<dbReference type="EMBL" id="CU329671">
    <property type="protein sequence ID" value="CAB40166.1"/>
    <property type="molecule type" value="Genomic_DNA"/>
</dbReference>
<dbReference type="PIR" id="T39912">
    <property type="entry name" value="T39912"/>
</dbReference>
<dbReference type="PIR" id="T43656">
    <property type="entry name" value="T43656"/>
</dbReference>
<dbReference type="RefSeq" id="NP_595358.1">
    <property type="nucleotide sequence ID" value="NM_001021265.2"/>
</dbReference>
<dbReference type="SMR" id="Q9UUM2"/>
<dbReference type="BioGRID" id="277251">
    <property type="interactions" value="62"/>
</dbReference>
<dbReference type="FunCoup" id="Q9UUM2">
    <property type="interactions" value="116"/>
</dbReference>
<dbReference type="IntAct" id="Q9UUM2">
    <property type="interactions" value="4"/>
</dbReference>
<dbReference type="STRING" id="284812.Q9UUM2"/>
<dbReference type="iPTMnet" id="Q9UUM2"/>
<dbReference type="PaxDb" id="4896-SPBC216.06c.1"/>
<dbReference type="EnsemblFungi" id="SPBC216.06c.1">
    <property type="protein sequence ID" value="SPBC216.06c.1:pep"/>
    <property type="gene ID" value="SPBC216.06c"/>
</dbReference>
<dbReference type="GeneID" id="2540728"/>
<dbReference type="KEGG" id="spo:2540728"/>
<dbReference type="PomBase" id="SPBC216.06c">
    <property type="gene designation" value="swi1"/>
</dbReference>
<dbReference type="VEuPathDB" id="FungiDB:SPBC216.06c"/>
<dbReference type="eggNOG" id="KOG1974">
    <property type="taxonomic scope" value="Eukaryota"/>
</dbReference>
<dbReference type="HOGENOM" id="CLU_004390_0_0_1"/>
<dbReference type="InParanoid" id="Q9UUM2"/>
<dbReference type="OMA" id="VNHHRHT"/>
<dbReference type="PhylomeDB" id="Q9UUM2"/>
<dbReference type="PRO" id="PR:Q9UUM2"/>
<dbReference type="Proteomes" id="UP000002485">
    <property type="component" value="Chromosome II"/>
</dbReference>
<dbReference type="GO" id="GO:0000785">
    <property type="term" value="C:chromatin"/>
    <property type="evidence" value="ECO:0000314"/>
    <property type="project" value="PomBase"/>
</dbReference>
<dbReference type="GO" id="GO:0044732">
    <property type="term" value="C:mitotic spindle pole body"/>
    <property type="evidence" value="ECO:0007005"/>
    <property type="project" value="PomBase"/>
</dbReference>
<dbReference type="GO" id="GO:0005634">
    <property type="term" value="C:nucleus"/>
    <property type="evidence" value="ECO:0000314"/>
    <property type="project" value="UniProtKB"/>
</dbReference>
<dbReference type="GO" id="GO:0031298">
    <property type="term" value="C:replication fork protection complex"/>
    <property type="evidence" value="ECO:0000314"/>
    <property type="project" value="PomBase"/>
</dbReference>
<dbReference type="GO" id="GO:0003677">
    <property type="term" value="F:DNA binding"/>
    <property type="evidence" value="ECO:0000314"/>
    <property type="project" value="PomBase"/>
</dbReference>
<dbReference type="GO" id="GO:0003690">
    <property type="term" value="F:double-stranded DNA binding"/>
    <property type="evidence" value="ECO:0000314"/>
    <property type="project" value="PomBase"/>
</dbReference>
<dbReference type="GO" id="GO:0000403">
    <property type="term" value="F:Y-form DNA binding"/>
    <property type="evidence" value="ECO:0000314"/>
    <property type="project" value="PomBase"/>
</dbReference>
<dbReference type="GO" id="GO:0006281">
    <property type="term" value="P:DNA repair"/>
    <property type="evidence" value="ECO:0000318"/>
    <property type="project" value="GO_Central"/>
</dbReference>
<dbReference type="GO" id="GO:0000076">
    <property type="term" value="P:DNA replication checkpoint signaling"/>
    <property type="evidence" value="ECO:0000318"/>
    <property type="project" value="GO_Central"/>
</dbReference>
<dbReference type="GO" id="GO:0007534">
    <property type="term" value="P:gene conversion at mating-type locus"/>
    <property type="evidence" value="ECO:0000315"/>
    <property type="project" value="PomBase"/>
</dbReference>
<dbReference type="GO" id="GO:0043111">
    <property type="term" value="P:replication fork arrest"/>
    <property type="evidence" value="ECO:0000315"/>
    <property type="project" value="UniProtKB"/>
</dbReference>
<dbReference type="GO" id="GO:0011000">
    <property type="term" value="P:replication fork arrest at mating type locus"/>
    <property type="evidence" value="ECO:0000314"/>
    <property type="project" value="PomBase"/>
</dbReference>
<dbReference type="GO" id="GO:0031297">
    <property type="term" value="P:replication fork processing"/>
    <property type="evidence" value="ECO:0000315"/>
    <property type="project" value="PomBase"/>
</dbReference>
<dbReference type="InterPro" id="IPR044998">
    <property type="entry name" value="Timeless"/>
</dbReference>
<dbReference type="InterPro" id="IPR006906">
    <property type="entry name" value="Timeless_N"/>
</dbReference>
<dbReference type="PANTHER" id="PTHR22940:SF4">
    <property type="entry name" value="PROTEIN TIMELESS HOMOLOG"/>
    <property type="match status" value="1"/>
</dbReference>
<dbReference type="PANTHER" id="PTHR22940">
    <property type="entry name" value="TIMEOUT/TIMELESS-2"/>
    <property type="match status" value="1"/>
</dbReference>
<dbReference type="Pfam" id="PF04821">
    <property type="entry name" value="TIMELESS"/>
    <property type="match status" value="1"/>
</dbReference>
<evidence type="ECO:0000269" key="1">
    <source>
    </source>
</evidence>
<evidence type="ECO:0000269" key="2">
    <source>
    </source>
</evidence>
<evidence type="ECO:0000269" key="3">
    <source>
    </source>
</evidence>
<evidence type="ECO:0000269" key="4">
    <source>
    </source>
</evidence>
<evidence type="ECO:0000269" key="5">
    <source>
    </source>
</evidence>
<evidence type="ECO:0000305" key="6"/>
<protein>
    <recommendedName>
        <fullName>Mating-type switching protein swi1</fullName>
    </recommendedName>
    <alternativeName>
        <fullName>Replication fork protection complex subunit swi1</fullName>
    </alternativeName>
</protein>
<sequence length="971" mass="112628">MELDEVIQGIVSAIGGFDYSDDEKVYVLGDEALACLKDLKRYLQVVDEKYKVWQIRSLLSSLQLVTNDICPILSDWDKDITNYRNWRIALACVELLVPLTWPLETEHETFRENVDVLYNLRQAQSNYKNSILSYKKGSVLSAILAVLLKPLSTPAESRTLRDKGIIRIVLLLFRNILQIDELKTKNETIISFAKAHILDLIVTLVSNLDEFEHFDVYILEIVYNLIRGCKPSALFSDASLTNSQTELNSLLLKESTQNRYLKRNAHTRHNRFGTMLSVQTEDRRFTIASQNIKTDGLDELDSHKRFRKRGTRRKHFDDINKSFFINTEAGTALRNFAVEFLEAGFNPLFQSLLKDLEREDPRVLPIHKMQLLYVQSFFLEFMRFSSKPKKTEEIYSNDYSFGLAASVFDQRALIMHNRLMVESFEMKQWSTFQASMLSMTQLLFTLRSMTLCSSEIYQRIADNLLSNIFYQEEILLLVYSALKHFKTQSFGYLDAITELTIVLLKELEKFSSAKQYLYVKKRRRNQKSVDSNVLESDEDEESSLINANAAVEDRLFDFGRYESRYCDNGCIDSFVLFLQCYQDLDSKQIHRAISFFYRIFVKQKCHVYLYRLDFLRVLDKMFNDHVYFSTTNSARQDFEQFFVYYMRKLSDALKDVPALFIELPFPKLTDTFYYLEYGKSPLFSIHGSRKGPLYETVPGLSHLEKVAAVVACLINENKSDLLDELKVQLNCLISERKLITLADENKYINEGGNDGERMGKNLKGDTDSFNTALLKDGKFRLLLELCGFEESDNNIDVQALWKLPNSVIIDELVEHAMLLRRFTDDPPTFEGTKPEDLLVRKQRGNVRLPSSSEGETSDEEIEFEADDPITFANRREALNKITDRKRKKMKTNETIIDHTTRKKKENHLRSAKYIVDSDDDSETDIAFFQSEAALREKNAQKASALFKRIDDLEMEGKLQEIEQLSENSSSD</sequence>
<gene>
    <name type="primary">swi1</name>
    <name type="ORF">SPBC216.06c</name>
</gene>
<accession>Q9UUM2</accession>
<accession>Q9Y7X0</accession>
<keyword id="KW-0131">Cell cycle</keyword>
<keyword id="KW-0227">DNA damage</keyword>
<keyword id="KW-0236">DNA replication inhibitor</keyword>
<keyword id="KW-0539">Nucleus</keyword>
<keyword id="KW-0597">Phosphoprotein</keyword>
<keyword id="KW-1185">Reference proteome</keyword>
<feature type="chain" id="PRO_0000072348" description="Mating-type switching protein swi1">
    <location>
        <begin position="1"/>
        <end position="971"/>
    </location>
</feature>
<feature type="modified residue" description="Phosphoserine" evidence="5">
    <location>
        <position position="528"/>
    </location>
</feature>
<feature type="modified residue" description="Phosphoserine" evidence="5">
    <location>
        <position position="536"/>
    </location>
</feature>
<feature type="modified residue" description="Phosphoserine" evidence="5">
    <location>
        <position position="970"/>
    </location>
</feature>
<feature type="sequence conflict" description="In Ref. 1; CAB44362." evidence="6" ref="1">
    <original>A</original>
    <variation>R</variation>
    <location>
        <position position="195"/>
    </location>
</feature>
<proteinExistence type="evidence at protein level"/>
<organism>
    <name type="scientific">Schizosaccharomyces pombe (strain 972 / ATCC 24843)</name>
    <name type="common">Fission yeast</name>
    <dbReference type="NCBI Taxonomy" id="284812"/>
    <lineage>
        <taxon>Eukaryota</taxon>
        <taxon>Fungi</taxon>
        <taxon>Dikarya</taxon>
        <taxon>Ascomycota</taxon>
        <taxon>Taphrinomycotina</taxon>
        <taxon>Schizosaccharomycetes</taxon>
        <taxon>Schizosaccharomycetales</taxon>
        <taxon>Schizosaccharomycetaceae</taxon>
        <taxon>Schizosaccharomyces</taxon>
    </lineage>
</organism>
<name>SWI1_SCHPO</name>